<feature type="chain" id="PRO_1000086231" description="Small ribosomal subunit protein uS13">
    <location>
        <begin position="1"/>
        <end position="122"/>
    </location>
</feature>
<feature type="region of interest" description="Disordered" evidence="2">
    <location>
        <begin position="95"/>
        <end position="122"/>
    </location>
</feature>
<accession>B0T2E4</accession>
<comment type="function">
    <text evidence="1">Located at the top of the head of the 30S subunit, it contacts several helices of the 16S rRNA. In the 70S ribosome it contacts the 23S rRNA (bridge B1a) and protein L5 of the 50S subunit (bridge B1b), connecting the 2 subunits; these bridges are implicated in subunit movement. Contacts the tRNAs in the A and P-sites.</text>
</comment>
<comment type="subunit">
    <text evidence="1">Part of the 30S ribosomal subunit. Forms a loose heterodimer with protein S19. Forms two bridges to the 50S subunit in the 70S ribosome.</text>
</comment>
<comment type="similarity">
    <text evidence="1">Belongs to the universal ribosomal protein uS13 family.</text>
</comment>
<reference key="1">
    <citation type="submission" date="2008-01" db="EMBL/GenBank/DDBJ databases">
        <title>Complete sequence of chromosome of Caulobacter sp. K31.</title>
        <authorList>
            <consortium name="US DOE Joint Genome Institute"/>
            <person name="Copeland A."/>
            <person name="Lucas S."/>
            <person name="Lapidus A."/>
            <person name="Barry K."/>
            <person name="Glavina del Rio T."/>
            <person name="Dalin E."/>
            <person name="Tice H."/>
            <person name="Pitluck S."/>
            <person name="Bruce D."/>
            <person name="Goodwin L."/>
            <person name="Thompson L.S."/>
            <person name="Brettin T."/>
            <person name="Detter J.C."/>
            <person name="Han C."/>
            <person name="Schmutz J."/>
            <person name="Larimer F."/>
            <person name="Land M."/>
            <person name="Hauser L."/>
            <person name="Kyrpides N."/>
            <person name="Kim E."/>
            <person name="Stephens C."/>
            <person name="Richardson P."/>
        </authorList>
    </citation>
    <scope>NUCLEOTIDE SEQUENCE [LARGE SCALE GENOMIC DNA]</scope>
    <source>
        <strain>K31</strain>
    </source>
</reference>
<dbReference type="EMBL" id="CP000927">
    <property type="protein sequence ID" value="ABZ70765.1"/>
    <property type="molecule type" value="Genomic_DNA"/>
</dbReference>
<dbReference type="SMR" id="B0T2E4"/>
<dbReference type="STRING" id="366602.Caul_1636"/>
<dbReference type="KEGG" id="cak:Caul_1636"/>
<dbReference type="eggNOG" id="COG0099">
    <property type="taxonomic scope" value="Bacteria"/>
</dbReference>
<dbReference type="HOGENOM" id="CLU_103849_1_2_5"/>
<dbReference type="OrthoDB" id="9803610at2"/>
<dbReference type="GO" id="GO:0005829">
    <property type="term" value="C:cytosol"/>
    <property type="evidence" value="ECO:0007669"/>
    <property type="project" value="TreeGrafter"/>
</dbReference>
<dbReference type="GO" id="GO:0015935">
    <property type="term" value="C:small ribosomal subunit"/>
    <property type="evidence" value="ECO:0007669"/>
    <property type="project" value="TreeGrafter"/>
</dbReference>
<dbReference type="GO" id="GO:0019843">
    <property type="term" value="F:rRNA binding"/>
    <property type="evidence" value="ECO:0007669"/>
    <property type="project" value="UniProtKB-UniRule"/>
</dbReference>
<dbReference type="GO" id="GO:0003735">
    <property type="term" value="F:structural constituent of ribosome"/>
    <property type="evidence" value="ECO:0007669"/>
    <property type="project" value="InterPro"/>
</dbReference>
<dbReference type="GO" id="GO:0000049">
    <property type="term" value="F:tRNA binding"/>
    <property type="evidence" value="ECO:0007669"/>
    <property type="project" value="UniProtKB-UniRule"/>
</dbReference>
<dbReference type="GO" id="GO:0006412">
    <property type="term" value="P:translation"/>
    <property type="evidence" value="ECO:0007669"/>
    <property type="project" value="UniProtKB-UniRule"/>
</dbReference>
<dbReference type="FunFam" id="1.10.8.50:FF:000001">
    <property type="entry name" value="30S ribosomal protein S13"/>
    <property type="match status" value="1"/>
</dbReference>
<dbReference type="FunFam" id="4.10.910.10:FF:000001">
    <property type="entry name" value="30S ribosomal protein S13"/>
    <property type="match status" value="1"/>
</dbReference>
<dbReference type="Gene3D" id="1.10.8.50">
    <property type="match status" value="1"/>
</dbReference>
<dbReference type="Gene3D" id="4.10.910.10">
    <property type="entry name" value="30s ribosomal protein s13, domain 2"/>
    <property type="match status" value="1"/>
</dbReference>
<dbReference type="HAMAP" id="MF_01315">
    <property type="entry name" value="Ribosomal_uS13"/>
    <property type="match status" value="1"/>
</dbReference>
<dbReference type="InterPro" id="IPR027437">
    <property type="entry name" value="Rbsml_uS13_C"/>
</dbReference>
<dbReference type="InterPro" id="IPR001892">
    <property type="entry name" value="Ribosomal_uS13"/>
</dbReference>
<dbReference type="InterPro" id="IPR010979">
    <property type="entry name" value="Ribosomal_uS13-like_H2TH"/>
</dbReference>
<dbReference type="InterPro" id="IPR019980">
    <property type="entry name" value="Ribosomal_uS13_bac-type"/>
</dbReference>
<dbReference type="InterPro" id="IPR018269">
    <property type="entry name" value="Ribosomal_uS13_CS"/>
</dbReference>
<dbReference type="NCBIfam" id="TIGR03631">
    <property type="entry name" value="uS13_bact"/>
    <property type="match status" value="1"/>
</dbReference>
<dbReference type="PANTHER" id="PTHR10871">
    <property type="entry name" value="30S RIBOSOMAL PROTEIN S13/40S RIBOSOMAL PROTEIN S18"/>
    <property type="match status" value="1"/>
</dbReference>
<dbReference type="PANTHER" id="PTHR10871:SF1">
    <property type="entry name" value="SMALL RIBOSOMAL SUBUNIT PROTEIN US13M"/>
    <property type="match status" value="1"/>
</dbReference>
<dbReference type="Pfam" id="PF00416">
    <property type="entry name" value="Ribosomal_S13"/>
    <property type="match status" value="1"/>
</dbReference>
<dbReference type="PIRSF" id="PIRSF002134">
    <property type="entry name" value="Ribosomal_S13"/>
    <property type="match status" value="1"/>
</dbReference>
<dbReference type="SUPFAM" id="SSF46946">
    <property type="entry name" value="S13-like H2TH domain"/>
    <property type="match status" value="1"/>
</dbReference>
<dbReference type="PROSITE" id="PS00646">
    <property type="entry name" value="RIBOSOMAL_S13_1"/>
    <property type="match status" value="1"/>
</dbReference>
<dbReference type="PROSITE" id="PS50159">
    <property type="entry name" value="RIBOSOMAL_S13_2"/>
    <property type="match status" value="1"/>
</dbReference>
<protein>
    <recommendedName>
        <fullName evidence="1">Small ribosomal subunit protein uS13</fullName>
    </recommendedName>
    <alternativeName>
        <fullName evidence="3">30S ribosomal protein S13</fullName>
    </alternativeName>
</protein>
<proteinExistence type="inferred from homology"/>
<gene>
    <name evidence="1" type="primary">rpsM</name>
    <name type="ordered locus">Caul_1636</name>
</gene>
<evidence type="ECO:0000255" key="1">
    <source>
        <dbReference type="HAMAP-Rule" id="MF_01315"/>
    </source>
</evidence>
<evidence type="ECO:0000256" key="2">
    <source>
        <dbReference type="SAM" id="MobiDB-lite"/>
    </source>
</evidence>
<evidence type="ECO:0000305" key="3"/>
<keyword id="KW-0687">Ribonucleoprotein</keyword>
<keyword id="KW-0689">Ribosomal protein</keyword>
<keyword id="KW-0694">RNA-binding</keyword>
<keyword id="KW-0699">rRNA-binding</keyword>
<keyword id="KW-0820">tRNA-binding</keyword>
<name>RS13_CAUSK</name>
<organism>
    <name type="scientific">Caulobacter sp. (strain K31)</name>
    <dbReference type="NCBI Taxonomy" id="366602"/>
    <lineage>
        <taxon>Bacteria</taxon>
        <taxon>Pseudomonadati</taxon>
        <taxon>Pseudomonadota</taxon>
        <taxon>Alphaproteobacteria</taxon>
        <taxon>Caulobacterales</taxon>
        <taxon>Caulobacteraceae</taxon>
        <taxon>Caulobacter</taxon>
    </lineage>
</organism>
<sequence length="122" mass="13723">MARIAGVNIPTNKRVLIALQYIHGIGQKSARDIVTKVGIDDARRVNQLTDAEVLAIRETIDKDFTVEGDLRRENSMNIKRLMDLACYRGLRHRKGLPVRGQRTHTNARTRKGPAKPIAGKKK</sequence>